<gene>
    <name type="ORF">ACLA_005680</name>
</gene>
<reference key="1">
    <citation type="journal article" date="2008" name="PLoS Genet.">
        <title>Genomic islands in the pathogenic filamentous fungus Aspergillus fumigatus.</title>
        <authorList>
            <person name="Fedorova N.D."/>
            <person name="Khaldi N."/>
            <person name="Joardar V.S."/>
            <person name="Maiti R."/>
            <person name="Amedeo P."/>
            <person name="Anderson M.J."/>
            <person name="Crabtree J."/>
            <person name="Silva J.C."/>
            <person name="Badger J.H."/>
            <person name="Albarraq A."/>
            <person name="Angiuoli S."/>
            <person name="Bussey H."/>
            <person name="Bowyer P."/>
            <person name="Cotty P.J."/>
            <person name="Dyer P.S."/>
            <person name="Egan A."/>
            <person name="Galens K."/>
            <person name="Fraser-Liggett C.M."/>
            <person name="Haas B.J."/>
            <person name="Inman J.M."/>
            <person name="Kent R."/>
            <person name="Lemieux S."/>
            <person name="Malavazi I."/>
            <person name="Orvis J."/>
            <person name="Roemer T."/>
            <person name="Ronning C.M."/>
            <person name="Sundaram J.P."/>
            <person name="Sutton G."/>
            <person name="Turner G."/>
            <person name="Venter J.C."/>
            <person name="White O.R."/>
            <person name="Whitty B.R."/>
            <person name="Youngman P."/>
            <person name="Wolfe K.H."/>
            <person name="Goldman G.H."/>
            <person name="Wortman J.R."/>
            <person name="Jiang B."/>
            <person name="Denning D.W."/>
            <person name="Nierman W.C."/>
        </authorList>
    </citation>
    <scope>NUCLEOTIDE SEQUENCE [LARGE SCALE GENOMIC DNA]</scope>
    <source>
        <strain>ATCC 1007 / CBS 513.65 / DSM 816 / NCTC 3887 / NRRL 1 / QM 1276 / 107</strain>
    </source>
</reference>
<comment type="function">
    <text evidence="1">Component of the eukaryotic translation initiation factor 3 (eIF-3) complex, which is involved in protein synthesis of a specialized repertoire of mRNAs and, together with other initiation factors, stimulates binding of mRNA and methionyl-tRNAi to the 40S ribosome. The eIF-3 complex specifically targets and initiates translation of a subset of mRNAs involved in cell proliferation.</text>
</comment>
<comment type="subunit">
    <text evidence="1">Component of the eukaryotic translation initiation factor 3 (eIF-3) complex.</text>
</comment>
<comment type="subcellular location">
    <subcellularLocation>
        <location evidence="1">Cytoplasm</location>
    </subcellularLocation>
</comment>
<comment type="similarity">
    <text evidence="1">Belongs to the eIF-3 subunit M family.</text>
</comment>
<feature type="chain" id="PRO_0000366011" description="Eukaryotic translation initiation factor 3 subunit M">
    <location>
        <begin position="1"/>
        <end position="471"/>
    </location>
</feature>
<feature type="domain" description="PCI" evidence="2">
    <location>
        <begin position="206"/>
        <end position="377"/>
    </location>
</feature>
<feature type="region of interest" description="Disordered" evidence="3">
    <location>
        <begin position="39"/>
        <end position="61"/>
    </location>
</feature>
<feature type="region of interest" description="Disordered" evidence="3">
    <location>
        <begin position="419"/>
        <end position="471"/>
    </location>
</feature>
<feature type="compositionally biased region" description="Basic and acidic residues" evidence="3">
    <location>
        <begin position="430"/>
        <end position="442"/>
    </location>
</feature>
<feature type="compositionally biased region" description="Low complexity" evidence="3">
    <location>
        <begin position="445"/>
        <end position="461"/>
    </location>
</feature>
<name>EIF3M_ASPCL</name>
<proteinExistence type="inferred from homology"/>
<keyword id="KW-0963">Cytoplasm</keyword>
<keyword id="KW-0396">Initiation factor</keyword>
<keyword id="KW-0648">Protein biosynthesis</keyword>
<keyword id="KW-1185">Reference proteome</keyword>
<accession>A1CD85</accession>
<dbReference type="EMBL" id="DS027051">
    <property type="protein sequence ID" value="EAW11812.1"/>
    <property type="molecule type" value="Genomic_DNA"/>
</dbReference>
<dbReference type="RefSeq" id="XP_001273238.1">
    <property type="nucleotide sequence ID" value="XM_001273237.1"/>
</dbReference>
<dbReference type="SMR" id="A1CD85"/>
<dbReference type="STRING" id="344612.A1CD85"/>
<dbReference type="EnsemblFungi" id="EAW11812">
    <property type="protein sequence ID" value="EAW11812"/>
    <property type="gene ID" value="ACLA_005680"/>
</dbReference>
<dbReference type="GeneID" id="4705565"/>
<dbReference type="KEGG" id="act:ACLA_005680"/>
<dbReference type="VEuPathDB" id="FungiDB:ACLA_005680"/>
<dbReference type="eggNOG" id="KOG2753">
    <property type="taxonomic scope" value="Eukaryota"/>
</dbReference>
<dbReference type="HOGENOM" id="CLU_035254_0_1_1"/>
<dbReference type="OMA" id="FNDEHKG"/>
<dbReference type="OrthoDB" id="10267031at2759"/>
<dbReference type="Proteomes" id="UP000006701">
    <property type="component" value="Unassembled WGS sequence"/>
</dbReference>
<dbReference type="GO" id="GO:0016282">
    <property type="term" value="C:eukaryotic 43S preinitiation complex"/>
    <property type="evidence" value="ECO:0007669"/>
    <property type="project" value="UniProtKB-UniRule"/>
</dbReference>
<dbReference type="GO" id="GO:0033290">
    <property type="term" value="C:eukaryotic 48S preinitiation complex"/>
    <property type="evidence" value="ECO:0007669"/>
    <property type="project" value="UniProtKB-UniRule"/>
</dbReference>
<dbReference type="GO" id="GO:0071541">
    <property type="term" value="C:eukaryotic translation initiation factor 3 complex, eIF3m"/>
    <property type="evidence" value="ECO:0007669"/>
    <property type="project" value="UniProtKB-UniRule"/>
</dbReference>
<dbReference type="GO" id="GO:0003743">
    <property type="term" value="F:translation initiation factor activity"/>
    <property type="evidence" value="ECO:0007669"/>
    <property type="project" value="UniProtKB-UniRule"/>
</dbReference>
<dbReference type="GO" id="GO:0001732">
    <property type="term" value="P:formation of cytoplasmic translation initiation complex"/>
    <property type="evidence" value="ECO:0007669"/>
    <property type="project" value="UniProtKB-UniRule"/>
</dbReference>
<dbReference type="HAMAP" id="MF_03012">
    <property type="entry name" value="eIF3m"/>
    <property type="match status" value="1"/>
</dbReference>
<dbReference type="InterPro" id="IPR016024">
    <property type="entry name" value="ARM-type_fold"/>
</dbReference>
<dbReference type="InterPro" id="IPR045237">
    <property type="entry name" value="COPS7/eIF3m"/>
</dbReference>
<dbReference type="InterPro" id="IPR027528">
    <property type="entry name" value="eIF3m"/>
</dbReference>
<dbReference type="InterPro" id="IPR040750">
    <property type="entry name" value="eIF3m_C_helix"/>
</dbReference>
<dbReference type="InterPro" id="IPR000717">
    <property type="entry name" value="PCI_dom"/>
</dbReference>
<dbReference type="PANTHER" id="PTHR15350">
    <property type="entry name" value="COP9 SIGNALOSOME COMPLEX SUBUNIT 7/DENDRITIC CELL PROTEIN GA17"/>
    <property type="match status" value="1"/>
</dbReference>
<dbReference type="PANTHER" id="PTHR15350:SF2">
    <property type="entry name" value="EUKARYOTIC TRANSLATION INITIATION FACTOR 3 SUBUNIT M"/>
    <property type="match status" value="1"/>
</dbReference>
<dbReference type="Pfam" id="PF18005">
    <property type="entry name" value="eIF3m_C_helix"/>
    <property type="match status" value="1"/>
</dbReference>
<dbReference type="Pfam" id="PF01399">
    <property type="entry name" value="PCI"/>
    <property type="match status" value="1"/>
</dbReference>
<dbReference type="SMART" id="SM00088">
    <property type="entry name" value="PINT"/>
    <property type="match status" value="1"/>
</dbReference>
<dbReference type="SUPFAM" id="SSF48371">
    <property type="entry name" value="ARM repeat"/>
    <property type="match status" value="1"/>
</dbReference>
<dbReference type="PROSITE" id="PS50250">
    <property type="entry name" value="PCI"/>
    <property type="match status" value="1"/>
</dbReference>
<protein>
    <recommendedName>
        <fullName evidence="1">Eukaryotic translation initiation factor 3 subunit M</fullName>
        <shortName evidence="1">eIF3m</shortName>
    </recommendedName>
</protein>
<evidence type="ECO:0000255" key="1">
    <source>
        <dbReference type="HAMAP-Rule" id="MF_03012"/>
    </source>
</evidence>
<evidence type="ECO:0000255" key="2">
    <source>
        <dbReference type="PROSITE-ProRule" id="PRU01185"/>
    </source>
</evidence>
<evidence type="ECO:0000256" key="3">
    <source>
        <dbReference type="SAM" id="MobiDB-lite"/>
    </source>
</evidence>
<sequence length="471" mass="51486">MPAPTNTLLIEGTFTELADEFAQYIDALRKNEGSSLQSEISSLLEPLRQQEQSEEEPDRKQRDEVLKKLVAAAAVLNAAPEKEIISAYNLLVHLVHQASNPDMFLSRICTYLAKPITTSPQFGPTLAISILTTIFNTLTSSDSSRYHVLLAIVAVIRQSGSSYAFEALKPQLTAQLPTWLAAWELDEEEAQKLHLAVADAAQASGDFELAQSHVVQALQTIPANESSSKEARDLAVRALASALKSPAVFDFTSLTAADAIQALRTSDSSLFELLEIFTADTLDAYEDFVAATPLASISGGVLADAGEALQNKLRLLTLASIAASAPSRSLPYATIASALRVPTEDVEKWVIDTIRAGLVEGKLSQLRSEFLVHRATYRVFGEKQWAEVQGRLMVWRRSLENVLGVVRAERERFIRESLQAATEEANQGKSGEKGGKGGDRRRNPQHQQQQQQSQPSQPQQPRETELVAGAE</sequence>
<organism>
    <name type="scientific">Aspergillus clavatus (strain ATCC 1007 / CBS 513.65 / DSM 816 / NCTC 3887 / NRRL 1 / QM 1276 / 107)</name>
    <dbReference type="NCBI Taxonomy" id="344612"/>
    <lineage>
        <taxon>Eukaryota</taxon>
        <taxon>Fungi</taxon>
        <taxon>Dikarya</taxon>
        <taxon>Ascomycota</taxon>
        <taxon>Pezizomycotina</taxon>
        <taxon>Eurotiomycetes</taxon>
        <taxon>Eurotiomycetidae</taxon>
        <taxon>Eurotiales</taxon>
        <taxon>Aspergillaceae</taxon>
        <taxon>Aspergillus</taxon>
        <taxon>Aspergillus subgen. Fumigati</taxon>
    </lineage>
</organism>